<sequence length="80" mass="9320">MATWLAIIFIVAALILGLIGGFLLARKYMMDYLKKNPPINEEMLRMMMMQMGQKPSQKKINQMMTMMNKNMDQNMKSAKK</sequence>
<protein>
    <recommendedName>
        <fullName evidence="1">UPF0154 protein SAB1201</fullName>
    </recommendedName>
</protein>
<comment type="subcellular location">
    <subcellularLocation>
        <location evidence="1">Cell membrane</location>
        <topology evidence="1">Single-pass membrane protein</topology>
    </subcellularLocation>
</comment>
<comment type="similarity">
    <text evidence="1">Belongs to the UPF0154 family.</text>
</comment>
<name>Y1201_STAAB</name>
<accession>Q2YXS4</accession>
<organism>
    <name type="scientific">Staphylococcus aureus (strain bovine RF122 / ET3-1)</name>
    <dbReference type="NCBI Taxonomy" id="273036"/>
    <lineage>
        <taxon>Bacteria</taxon>
        <taxon>Bacillati</taxon>
        <taxon>Bacillota</taxon>
        <taxon>Bacilli</taxon>
        <taxon>Bacillales</taxon>
        <taxon>Staphylococcaceae</taxon>
        <taxon>Staphylococcus</taxon>
    </lineage>
</organism>
<gene>
    <name type="ordered locus">SAB1201</name>
</gene>
<reference key="1">
    <citation type="journal article" date="2007" name="PLoS ONE">
        <title>Molecular correlates of host specialization in Staphylococcus aureus.</title>
        <authorList>
            <person name="Herron-Olson L."/>
            <person name="Fitzgerald J.R."/>
            <person name="Musser J.M."/>
            <person name="Kapur V."/>
        </authorList>
    </citation>
    <scope>NUCLEOTIDE SEQUENCE [LARGE SCALE GENOMIC DNA]</scope>
    <source>
        <strain>bovine RF122 / ET3-1</strain>
    </source>
</reference>
<evidence type="ECO:0000255" key="1">
    <source>
        <dbReference type="HAMAP-Rule" id="MF_00363"/>
    </source>
</evidence>
<proteinExistence type="inferred from homology"/>
<keyword id="KW-1003">Cell membrane</keyword>
<keyword id="KW-0472">Membrane</keyword>
<keyword id="KW-0812">Transmembrane</keyword>
<keyword id="KW-1133">Transmembrane helix</keyword>
<feature type="chain" id="PRO_1000005638" description="UPF0154 protein SAB1201">
    <location>
        <begin position="1"/>
        <end position="80"/>
    </location>
</feature>
<feature type="transmembrane region" description="Helical" evidence="1">
    <location>
        <begin position="4"/>
        <end position="24"/>
    </location>
</feature>
<dbReference type="EMBL" id="AJ938182">
    <property type="protein sequence ID" value="CAI80890.1"/>
    <property type="molecule type" value="Genomic_DNA"/>
</dbReference>
<dbReference type="RefSeq" id="WP_000246909.1">
    <property type="nucleotide sequence ID" value="NC_007622.1"/>
</dbReference>
<dbReference type="SMR" id="Q2YXS4"/>
<dbReference type="KEGG" id="sab:SAB1201"/>
<dbReference type="HOGENOM" id="CLU_180108_0_1_9"/>
<dbReference type="GO" id="GO:0005886">
    <property type="term" value="C:plasma membrane"/>
    <property type="evidence" value="ECO:0007669"/>
    <property type="project" value="UniProtKB-SubCell"/>
</dbReference>
<dbReference type="Gene3D" id="1.10.238.10">
    <property type="entry name" value="EF-hand"/>
    <property type="match status" value="1"/>
</dbReference>
<dbReference type="HAMAP" id="MF_00363">
    <property type="entry name" value="UPF0154"/>
    <property type="match status" value="1"/>
</dbReference>
<dbReference type="InterPro" id="IPR011992">
    <property type="entry name" value="EF-hand-dom_pair"/>
</dbReference>
<dbReference type="InterPro" id="IPR005359">
    <property type="entry name" value="UPF0154"/>
</dbReference>
<dbReference type="Pfam" id="PF03672">
    <property type="entry name" value="UPF0154"/>
    <property type="match status" value="1"/>
</dbReference>
<dbReference type="SUPFAM" id="SSF47473">
    <property type="entry name" value="EF-hand"/>
    <property type="match status" value="1"/>
</dbReference>